<sequence length="598" mass="68144">MSQTGAPPRWRNCPRRGQPVAGKFLPMKTMLGPRYDDKVPEENRFHPSMLSNYLKSLKVKMGLLVDLTNTTRFYDRADIEKEGIKYVKLSCKGHGECPTAETTEMFIRLCEHFIEKTPTELIGVHCTHGFNRTGFLICAYLVEKMDWSIEAAVAAFAQARPPGIYKGDYLKELFRRYGDVEDAPAAPPLPEWCFDEDEEEDGEEDGSASAPASEPSSSHTGQSKKKKERLKLGAVFLEGVSVKGVSQVTTQPKLGEIQRKCQQFSEWDRSGFPGAQPVSMDRKNIRMLEQNGYKVSWKADGTRYMMLIDGRNEVYMIDRDNSVFHIENLEFPFRKDLRIHLSNTLLDGEMIIDKVNGQPVPRYLIYDIIKFSGQPVGQCDFNRRLLCIEKEIISPRFEKMKLGQIDKAKEPFSVRNKPFFDIHAARKLLEGSFTSQVSHEVDGLIFQPIGKYKPGRCDDILKWKPPSHNSVDFRLKITKVGGEGLIPQTVGLLYVGNYDMPFAQMKITKDLKQYDNKIIECTFVNNTWVFMRQRVDKSFPNAYDTAMAVCNSIQHPVTKEILLEFLERCAQVQSRKNPADSDLMPPPPPKRSANSIPQ</sequence>
<comment type="function">
    <text evidence="2">Bifunctional mRNA-capping enzyme exhibiting RNA 5'-triphosphate monophosphatase activity in the N-terminal part and mRNA guanylyltransferase activity in the C-terminal part. Catalyzes the first two steps of cap formation: by removing the gamma-phosphate from the 5'-triphosphate end of nascent mRNA to yield a diphosphate end, and by transferring the GMP moiety of GTP to the 5'-diphosphate terminus of RNA via a covalent enzyme-GMP reaction intermediate.</text>
</comment>
<comment type="catalytic activity">
    <reaction evidence="2">
        <text>a 5'-end triphospho-ribonucleoside in mRNA + H2O = a 5'-end diphospho-ribonucleoside in mRNA + phosphate + H(+)</text>
        <dbReference type="Rhea" id="RHEA:67004"/>
        <dbReference type="Rhea" id="RHEA-COMP:17164"/>
        <dbReference type="Rhea" id="RHEA-COMP:17165"/>
        <dbReference type="ChEBI" id="CHEBI:15377"/>
        <dbReference type="ChEBI" id="CHEBI:15378"/>
        <dbReference type="ChEBI" id="CHEBI:43474"/>
        <dbReference type="ChEBI" id="CHEBI:167616"/>
        <dbReference type="ChEBI" id="CHEBI:167618"/>
        <dbReference type="EC" id="3.6.1.74"/>
    </reaction>
    <physiologicalReaction direction="left-to-right" evidence="6">
        <dbReference type="Rhea" id="RHEA:67005"/>
    </physiologicalReaction>
</comment>
<comment type="catalytic activity">
    <reaction>
        <text>a 5'-end diphospho-ribonucleoside in mRNA + GTP + H(+) = a 5'-end (5'-triphosphoguanosine)-ribonucleoside in mRNA + diphosphate</text>
        <dbReference type="Rhea" id="RHEA:67012"/>
        <dbReference type="Rhea" id="RHEA-COMP:17165"/>
        <dbReference type="Rhea" id="RHEA-COMP:17166"/>
        <dbReference type="ChEBI" id="CHEBI:15378"/>
        <dbReference type="ChEBI" id="CHEBI:33019"/>
        <dbReference type="ChEBI" id="CHEBI:37565"/>
        <dbReference type="ChEBI" id="CHEBI:167616"/>
        <dbReference type="ChEBI" id="CHEBI:167617"/>
        <dbReference type="EC" id="2.7.7.50"/>
    </reaction>
    <physiologicalReaction direction="left-to-right" evidence="6">
        <dbReference type="Rhea" id="RHEA:67013"/>
    </physiologicalReaction>
</comment>
<comment type="subcellular location">
    <subcellularLocation>
        <location evidence="1">Nucleus</location>
    </subcellularLocation>
</comment>
<comment type="similarity">
    <text evidence="6">In the N-terminal section; belongs to the non-receptor class of the protein-tyrosine phosphatase family.</text>
</comment>
<comment type="similarity">
    <text evidence="6">In the C-terminal section; belongs to the eukaryotic GTase family.</text>
</comment>
<evidence type="ECO:0000250" key="1"/>
<evidence type="ECO:0000250" key="2">
    <source>
        <dbReference type="UniProtKB" id="O60942"/>
    </source>
</evidence>
<evidence type="ECO:0000255" key="3"/>
<evidence type="ECO:0000255" key="4">
    <source>
        <dbReference type="PROSITE-ProRule" id="PRU00160"/>
    </source>
</evidence>
<evidence type="ECO:0000256" key="5">
    <source>
        <dbReference type="SAM" id="MobiDB-lite"/>
    </source>
</evidence>
<evidence type="ECO:0000305" key="6"/>
<accession>Q6NY98</accession>
<keyword id="KW-0342">GTP-binding</keyword>
<keyword id="KW-0378">Hydrolase</keyword>
<keyword id="KW-0506">mRNA capping</keyword>
<keyword id="KW-0507">mRNA processing</keyword>
<keyword id="KW-0511">Multifunctional enzyme</keyword>
<keyword id="KW-0547">Nucleotide-binding</keyword>
<keyword id="KW-0548">Nucleotidyltransferase</keyword>
<keyword id="KW-0539">Nucleus</keyword>
<keyword id="KW-0904">Protein phosphatase</keyword>
<keyword id="KW-1185">Reference proteome</keyword>
<keyword id="KW-0808">Transferase</keyword>
<name>MCE1_DANRE</name>
<organism>
    <name type="scientific">Danio rerio</name>
    <name type="common">Zebrafish</name>
    <name type="synonym">Brachydanio rerio</name>
    <dbReference type="NCBI Taxonomy" id="7955"/>
    <lineage>
        <taxon>Eukaryota</taxon>
        <taxon>Metazoa</taxon>
        <taxon>Chordata</taxon>
        <taxon>Craniata</taxon>
        <taxon>Vertebrata</taxon>
        <taxon>Euteleostomi</taxon>
        <taxon>Actinopterygii</taxon>
        <taxon>Neopterygii</taxon>
        <taxon>Teleostei</taxon>
        <taxon>Ostariophysi</taxon>
        <taxon>Cypriniformes</taxon>
        <taxon>Danionidae</taxon>
        <taxon>Danioninae</taxon>
        <taxon>Danio</taxon>
    </lineage>
</organism>
<protein>
    <recommendedName>
        <fullName>mRNA-capping enzyme</fullName>
    </recommendedName>
    <domain>
        <recommendedName>
            <fullName>mRNA 5'-triphosphate monophosphatase</fullName>
            <ecNumber evidence="2">3.6.1.74</ecNumber>
        </recommendedName>
        <alternativeName>
            <fullName>mRNA 5'-phosphatase</fullName>
        </alternativeName>
    </domain>
    <domain>
        <recommendedName>
            <fullName>mRNA guanylyltransferase</fullName>
            <ecNumber evidence="2">2.7.7.50</ecNumber>
        </recommendedName>
        <alternativeName>
            <fullName>GTP--RNA guanylyltransferase</fullName>
            <shortName>GTase</shortName>
        </alternativeName>
    </domain>
</protein>
<proteinExistence type="evidence at transcript level"/>
<reference key="1">
    <citation type="journal article" date="2004" name="Proc. Natl. Acad. Sci. U.S.A.">
        <title>Identification of 315 genes essential for early zebrafish development.</title>
        <authorList>
            <person name="Amsterdam A."/>
            <person name="Nissen R.M."/>
            <person name="Sun Z."/>
            <person name="Swindell E.C."/>
            <person name="Farrington S."/>
            <person name="Hopkins N."/>
        </authorList>
    </citation>
    <scope>NUCLEOTIDE SEQUENCE [LARGE SCALE MRNA]</scope>
    <source>
        <tissue>Embryo</tissue>
    </source>
</reference>
<reference key="2">
    <citation type="journal article" date="2013" name="Nature">
        <title>The zebrafish reference genome sequence and its relationship to the human genome.</title>
        <authorList>
            <person name="Howe K."/>
            <person name="Clark M.D."/>
            <person name="Torroja C.F."/>
            <person name="Torrance J."/>
            <person name="Berthelot C."/>
            <person name="Muffato M."/>
            <person name="Collins J.E."/>
            <person name="Humphray S."/>
            <person name="McLaren K."/>
            <person name="Matthews L."/>
            <person name="McLaren S."/>
            <person name="Sealy I."/>
            <person name="Caccamo M."/>
            <person name="Churcher C."/>
            <person name="Scott C."/>
            <person name="Barrett J.C."/>
            <person name="Koch R."/>
            <person name="Rauch G.J."/>
            <person name="White S."/>
            <person name="Chow W."/>
            <person name="Kilian B."/>
            <person name="Quintais L.T."/>
            <person name="Guerra-Assuncao J.A."/>
            <person name="Zhou Y."/>
            <person name="Gu Y."/>
            <person name="Yen J."/>
            <person name="Vogel J.H."/>
            <person name="Eyre T."/>
            <person name="Redmond S."/>
            <person name="Banerjee R."/>
            <person name="Chi J."/>
            <person name="Fu B."/>
            <person name="Langley E."/>
            <person name="Maguire S.F."/>
            <person name="Laird G.K."/>
            <person name="Lloyd D."/>
            <person name="Kenyon E."/>
            <person name="Donaldson S."/>
            <person name="Sehra H."/>
            <person name="Almeida-King J."/>
            <person name="Loveland J."/>
            <person name="Trevanion S."/>
            <person name="Jones M."/>
            <person name="Quail M."/>
            <person name="Willey D."/>
            <person name="Hunt A."/>
            <person name="Burton J."/>
            <person name="Sims S."/>
            <person name="McLay K."/>
            <person name="Plumb B."/>
            <person name="Davis J."/>
            <person name="Clee C."/>
            <person name="Oliver K."/>
            <person name="Clark R."/>
            <person name="Riddle C."/>
            <person name="Elliot D."/>
            <person name="Threadgold G."/>
            <person name="Harden G."/>
            <person name="Ware D."/>
            <person name="Begum S."/>
            <person name="Mortimore B."/>
            <person name="Kerry G."/>
            <person name="Heath P."/>
            <person name="Phillimore B."/>
            <person name="Tracey A."/>
            <person name="Corby N."/>
            <person name="Dunn M."/>
            <person name="Johnson C."/>
            <person name="Wood J."/>
            <person name="Clark S."/>
            <person name="Pelan S."/>
            <person name="Griffiths G."/>
            <person name="Smith M."/>
            <person name="Glithero R."/>
            <person name="Howden P."/>
            <person name="Barker N."/>
            <person name="Lloyd C."/>
            <person name="Stevens C."/>
            <person name="Harley J."/>
            <person name="Holt K."/>
            <person name="Panagiotidis G."/>
            <person name="Lovell J."/>
            <person name="Beasley H."/>
            <person name="Henderson C."/>
            <person name="Gordon D."/>
            <person name="Auger K."/>
            <person name="Wright D."/>
            <person name="Collins J."/>
            <person name="Raisen C."/>
            <person name="Dyer L."/>
            <person name="Leung K."/>
            <person name="Robertson L."/>
            <person name="Ambridge K."/>
            <person name="Leongamornlert D."/>
            <person name="McGuire S."/>
            <person name="Gilderthorp R."/>
            <person name="Griffiths C."/>
            <person name="Manthravadi D."/>
            <person name="Nichol S."/>
            <person name="Barker G."/>
            <person name="Whitehead S."/>
            <person name="Kay M."/>
            <person name="Brown J."/>
            <person name="Murnane C."/>
            <person name="Gray E."/>
            <person name="Humphries M."/>
            <person name="Sycamore N."/>
            <person name="Barker D."/>
            <person name="Saunders D."/>
            <person name="Wallis J."/>
            <person name="Babbage A."/>
            <person name="Hammond S."/>
            <person name="Mashreghi-Mohammadi M."/>
            <person name="Barr L."/>
            <person name="Martin S."/>
            <person name="Wray P."/>
            <person name="Ellington A."/>
            <person name="Matthews N."/>
            <person name="Ellwood M."/>
            <person name="Woodmansey R."/>
            <person name="Clark G."/>
            <person name="Cooper J."/>
            <person name="Tromans A."/>
            <person name="Grafham D."/>
            <person name="Skuce C."/>
            <person name="Pandian R."/>
            <person name="Andrews R."/>
            <person name="Harrison E."/>
            <person name="Kimberley A."/>
            <person name="Garnett J."/>
            <person name="Fosker N."/>
            <person name="Hall R."/>
            <person name="Garner P."/>
            <person name="Kelly D."/>
            <person name="Bird C."/>
            <person name="Palmer S."/>
            <person name="Gehring I."/>
            <person name="Berger A."/>
            <person name="Dooley C.M."/>
            <person name="Ersan-Urun Z."/>
            <person name="Eser C."/>
            <person name="Geiger H."/>
            <person name="Geisler M."/>
            <person name="Karotki L."/>
            <person name="Kirn A."/>
            <person name="Konantz J."/>
            <person name="Konantz M."/>
            <person name="Oberlander M."/>
            <person name="Rudolph-Geiger S."/>
            <person name="Teucke M."/>
            <person name="Lanz C."/>
            <person name="Raddatz G."/>
            <person name="Osoegawa K."/>
            <person name="Zhu B."/>
            <person name="Rapp A."/>
            <person name="Widaa S."/>
            <person name="Langford C."/>
            <person name="Yang F."/>
            <person name="Schuster S.C."/>
            <person name="Carter N.P."/>
            <person name="Harrow J."/>
            <person name="Ning Z."/>
            <person name="Herrero J."/>
            <person name="Searle S.M."/>
            <person name="Enright A."/>
            <person name="Geisler R."/>
            <person name="Plasterk R.H."/>
            <person name="Lee C."/>
            <person name="Westerfield M."/>
            <person name="de Jong P.J."/>
            <person name="Zon L.I."/>
            <person name="Postlethwait J.H."/>
            <person name="Nusslein-Volhard C."/>
            <person name="Hubbard T.J."/>
            <person name="Roest Crollius H."/>
            <person name="Rogers J."/>
            <person name="Stemple D.L."/>
        </authorList>
    </citation>
    <scope>NUCLEOTIDE SEQUENCE [LARGE SCALE GENOMIC DNA]</scope>
    <source>
        <strain>Tuebingen</strain>
    </source>
</reference>
<reference key="3">
    <citation type="submission" date="2004-03" db="EMBL/GenBank/DDBJ databases">
        <authorList>
            <consortium name="NIH - Zebrafish Gene Collection (ZGC) project"/>
        </authorList>
    </citation>
    <scope>NUCLEOTIDE SEQUENCE [LARGE SCALE MRNA]</scope>
</reference>
<feature type="chain" id="PRO_0000399497" description="mRNA-capping enzyme">
    <location>
        <begin position="1"/>
        <end position="598"/>
    </location>
</feature>
<feature type="domain" description="Tyrosine-protein phosphatase" evidence="4">
    <location>
        <begin position="25"/>
        <end position="183"/>
    </location>
</feature>
<feature type="region of interest" description="TPase">
    <location>
        <begin position="1"/>
        <end position="215"/>
    </location>
</feature>
<feature type="region of interest" description="Disordered" evidence="5">
    <location>
        <begin position="186"/>
        <end position="227"/>
    </location>
</feature>
<feature type="region of interest" description="GTase">
    <location>
        <begin position="233"/>
        <end position="598"/>
    </location>
</feature>
<feature type="region of interest" description="Disordered" evidence="5">
    <location>
        <begin position="575"/>
        <end position="598"/>
    </location>
</feature>
<feature type="compositionally biased region" description="Acidic residues" evidence="5">
    <location>
        <begin position="193"/>
        <end position="206"/>
    </location>
</feature>
<feature type="compositionally biased region" description="Low complexity" evidence="5">
    <location>
        <begin position="207"/>
        <end position="218"/>
    </location>
</feature>
<feature type="active site" description="Phosphocysteine intermediate" evidence="4">
    <location>
        <position position="126"/>
    </location>
</feature>
<feature type="active site" description="N6-GMP-lysine intermediate" evidence="1">
    <location>
        <position position="298"/>
    </location>
</feature>
<feature type="binding site" evidence="1">
    <location>
        <position position="303"/>
    </location>
    <ligand>
        <name>GTP</name>
        <dbReference type="ChEBI" id="CHEBI:37565"/>
    </ligand>
</feature>
<feature type="binding site" evidence="3">
    <location>
        <position position="319"/>
    </location>
    <ligand>
        <name>GTP</name>
        <dbReference type="ChEBI" id="CHEBI:37565"/>
    </ligand>
</feature>
<feature type="binding site" evidence="3">
    <location>
        <begin position="347"/>
        <end position="349"/>
    </location>
    <ligand>
        <name>GTP</name>
        <dbReference type="ChEBI" id="CHEBI:37565"/>
    </ligand>
</feature>
<feature type="binding site" evidence="3">
    <location>
        <begin position="462"/>
        <end position="464"/>
    </location>
    <ligand>
        <name>GTP</name>
        <dbReference type="ChEBI" id="CHEBI:37565"/>
    </ligand>
</feature>
<feature type="binding site" evidence="3">
    <location>
        <begin position="532"/>
        <end position="537"/>
    </location>
    <ligand>
        <name>GTP</name>
        <dbReference type="ChEBI" id="CHEBI:37565"/>
    </ligand>
</feature>
<gene>
    <name type="primary">rngtt</name>
    <name type="ORF">si:ch211-241P10.5</name>
    <name type="ORF">zgc:76886</name>
</gene>
<dbReference type="EC" id="3.6.1.74" evidence="2"/>
<dbReference type="EC" id="2.7.7.50" evidence="2"/>
<dbReference type="EMBL" id="AY648815">
    <property type="protein sequence ID" value="AAT68133.1"/>
    <property type="molecule type" value="mRNA"/>
</dbReference>
<dbReference type="EMBL" id="BX666063">
    <property type="protein sequence ID" value="CAH68875.1"/>
    <property type="molecule type" value="Genomic_DNA"/>
</dbReference>
<dbReference type="EMBL" id="BX537249">
    <property type="protein sequence ID" value="CAH68875.1"/>
    <property type="status" value="JOINED"/>
    <property type="molecule type" value="Genomic_DNA"/>
</dbReference>
<dbReference type="EMBL" id="BX537259">
    <property type="protein sequence ID" value="CAH68875.1"/>
    <property type="status" value="JOINED"/>
    <property type="molecule type" value="Genomic_DNA"/>
</dbReference>
<dbReference type="EMBL" id="BX537249">
    <property type="protein sequence ID" value="CAH69114.1"/>
    <property type="molecule type" value="Genomic_DNA"/>
</dbReference>
<dbReference type="EMBL" id="BX537259">
    <property type="protein sequence ID" value="CAH69114.1"/>
    <property type="status" value="JOINED"/>
    <property type="molecule type" value="Genomic_DNA"/>
</dbReference>
<dbReference type="EMBL" id="BX666063">
    <property type="protein sequence ID" value="CAH69114.1"/>
    <property type="status" value="JOINED"/>
    <property type="molecule type" value="Genomic_DNA"/>
</dbReference>
<dbReference type="EMBL" id="BX537259">
    <property type="protein sequence ID" value="CAI29395.1"/>
    <property type="molecule type" value="Genomic_DNA"/>
</dbReference>
<dbReference type="EMBL" id="BX537249">
    <property type="protein sequence ID" value="CAI29395.1"/>
    <property type="status" value="JOINED"/>
    <property type="molecule type" value="Genomic_DNA"/>
</dbReference>
<dbReference type="EMBL" id="BX666063">
    <property type="protein sequence ID" value="CAI29395.1"/>
    <property type="status" value="JOINED"/>
    <property type="molecule type" value="Genomic_DNA"/>
</dbReference>
<dbReference type="EMBL" id="BC066685">
    <property type="protein sequence ID" value="AAH66685.1"/>
    <property type="molecule type" value="mRNA"/>
</dbReference>
<dbReference type="RefSeq" id="NP_998032.1">
    <property type="nucleotide sequence ID" value="NM_212867.1"/>
</dbReference>
<dbReference type="SMR" id="Q6NY98"/>
<dbReference type="FunCoup" id="Q6NY98">
    <property type="interactions" value="2431"/>
</dbReference>
<dbReference type="STRING" id="7955.ENSDARP00000040679"/>
<dbReference type="PaxDb" id="7955-ENSDARP00000040679"/>
<dbReference type="Ensembl" id="ENSDART00000040680">
    <property type="protein sequence ID" value="ENSDARP00000040679"/>
    <property type="gene ID" value="ENSDARG00000032261"/>
</dbReference>
<dbReference type="GeneID" id="405803"/>
<dbReference type="KEGG" id="dre:405803"/>
<dbReference type="AGR" id="ZFIN:ZDB-GENE-040426-2087"/>
<dbReference type="CTD" id="8732"/>
<dbReference type="ZFIN" id="ZDB-GENE-040426-2087">
    <property type="gene designation" value="rngtt"/>
</dbReference>
<dbReference type="eggNOG" id="KOG2386">
    <property type="taxonomic scope" value="Eukaryota"/>
</dbReference>
<dbReference type="HOGENOM" id="CLU_021710_3_0_1"/>
<dbReference type="InParanoid" id="Q6NY98"/>
<dbReference type="OMA" id="FWDIWMS"/>
<dbReference type="OrthoDB" id="200924at2759"/>
<dbReference type="PhylomeDB" id="Q6NY98"/>
<dbReference type="TreeFam" id="TF314914"/>
<dbReference type="Reactome" id="R-DRE-72086">
    <property type="pathway name" value="mRNA Capping"/>
</dbReference>
<dbReference type="Reactome" id="R-DRE-77075">
    <property type="pathway name" value="RNA Pol II CTD phosphorylation and interaction with CE"/>
</dbReference>
<dbReference type="PRO" id="PR:Q6NY98"/>
<dbReference type="Proteomes" id="UP000000437">
    <property type="component" value="Chromosome 20"/>
</dbReference>
<dbReference type="Bgee" id="ENSDARG00000032261">
    <property type="expression patterns" value="Expressed in mature ovarian follicle and 27 other cell types or tissues"/>
</dbReference>
<dbReference type="GO" id="GO:0005634">
    <property type="term" value="C:nucleus"/>
    <property type="evidence" value="ECO:0007669"/>
    <property type="project" value="UniProtKB-SubCell"/>
</dbReference>
<dbReference type="GO" id="GO:0005524">
    <property type="term" value="F:ATP binding"/>
    <property type="evidence" value="ECO:0007669"/>
    <property type="project" value="InterPro"/>
</dbReference>
<dbReference type="GO" id="GO:0005525">
    <property type="term" value="F:GTP binding"/>
    <property type="evidence" value="ECO:0007669"/>
    <property type="project" value="UniProtKB-KW"/>
</dbReference>
<dbReference type="GO" id="GO:0050355">
    <property type="term" value="F:inorganic triphosphate phosphatase activity"/>
    <property type="evidence" value="ECO:0000250"/>
    <property type="project" value="UniProtKB"/>
</dbReference>
<dbReference type="GO" id="GO:0140818">
    <property type="term" value="F:mRNA 5'-triphosphate monophosphatase activity"/>
    <property type="evidence" value="ECO:0007669"/>
    <property type="project" value="InterPro"/>
</dbReference>
<dbReference type="GO" id="GO:0004484">
    <property type="term" value="F:mRNA guanylyltransferase activity"/>
    <property type="evidence" value="ECO:0000250"/>
    <property type="project" value="UniProtKB"/>
</dbReference>
<dbReference type="GO" id="GO:0004721">
    <property type="term" value="F:phosphoprotein phosphatase activity"/>
    <property type="evidence" value="ECO:0007669"/>
    <property type="project" value="UniProtKB-KW"/>
</dbReference>
<dbReference type="GO" id="GO:0004651">
    <property type="term" value="F:polynucleotide 5'-phosphatase activity"/>
    <property type="evidence" value="ECO:0007669"/>
    <property type="project" value="UniProtKB-EC"/>
</dbReference>
<dbReference type="GO" id="GO:0006370">
    <property type="term" value="P:7-methylguanosine mRNA capping"/>
    <property type="evidence" value="ECO:0000250"/>
    <property type="project" value="UniProtKB"/>
</dbReference>
<dbReference type="CDD" id="cd07895">
    <property type="entry name" value="Adenylation_mRNA_capping"/>
    <property type="match status" value="1"/>
</dbReference>
<dbReference type="CDD" id="cd17664">
    <property type="entry name" value="Mce1_N"/>
    <property type="match status" value="1"/>
</dbReference>
<dbReference type="FunFam" id="2.40.50.140:FF:000111">
    <property type="entry name" value="mRNA-capping enzyme"/>
    <property type="match status" value="1"/>
</dbReference>
<dbReference type="FunFam" id="3.30.1490.430:FF:000001">
    <property type="entry name" value="mRNA-capping enzyme"/>
    <property type="match status" value="1"/>
</dbReference>
<dbReference type="FunFam" id="3.30.470.30:FF:000040">
    <property type="entry name" value="mRNA-capping enzyme"/>
    <property type="match status" value="1"/>
</dbReference>
<dbReference type="FunFam" id="3.90.190.10:FF:000040">
    <property type="entry name" value="mRNA-capping enzyme"/>
    <property type="match status" value="1"/>
</dbReference>
<dbReference type="Gene3D" id="3.30.1490.430">
    <property type="match status" value="1"/>
</dbReference>
<dbReference type="Gene3D" id="3.30.470.30">
    <property type="entry name" value="DNA ligase/mRNA capping enzyme"/>
    <property type="match status" value="1"/>
</dbReference>
<dbReference type="Gene3D" id="2.40.50.140">
    <property type="entry name" value="Nucleic acid-binding proteins"/>
    <property type="match status" value="1"/>
</dbReference>
<dbReference type="Gene3D" id="3.90.190.10">
    <property type="entry name" value="Protein tyrosine phosphatase superfamily"/>
    <property type="match status" value="1"/>
</dbReference>
<dbReference type="InterPro" id="IPR000340">
    <property type="entry name" value="Dual-sp_phosphatase_cat-dom"/>
</dbReference>
<dbReference type="InterPro" id="IPR017074">
    <property type="entry name" value="mRNA_cap_enz_bifunc"/>
</dbReference>
<dbReference type="InterPro" id="IPR001339">
    <property type="entry name" value="mRNA_cap_enzyme_adenylation"/>
</dbReference>
<dbReference type="InterPro" id="IPR013846">
    <property type="entry name" value="mRNA_cap_enzyme_C"/>
</dbReference>
<dbReference type="InterPro" id="IPR051029">
    <property type="entry name" value="mRNA_Capping_Enz/RNA_Phosphat"/>
</dbReference>
<dbReference type="InterPro" id="IPR012340">
    <property type="entry name" value="NA-bd_OB-fold"/>
</dbReference>
<dbReference type="InterPro" id="IPR029021">
    <property type="entry name" value="Prot-tyrosine_phosphatase-like"/>
</dbReference>
<dbReference type="InterPro" id="IPR016130">
    <property type="entry name" value="Tyr_Pase_AS"/>
</dbReference>
<dbReference type="InterPro" id="IPR000387">
    <property type="entry name" value="Tyr_Pase_dom"/>
</dbReference>
<dbReference type="InterPro" id="IPR020422">
    <property type="entry name" value="TYR_PHOSPHATASE_DUAL_dom"/>
</dbReference>
<dbReference type="PANTHER" id="PTHR10367">
    <property type="entry name" value="MRNA-CAPPING ENZYME"/>
    <property type="match status" value="1"/>
</dbReference>
<dbReference type="PANTHER" id="PTHR10367:SF17">
    <property type="entry name" value="MRNA-CAPPING ENZYME"/>
    <property type="match status" value="1"/>
</dbReference>
<dbReference type="Pfam" id="PF00782">
    <property type="entry name" value="DSPc"/>
    <property type="match status" value="1"/>
</dbReference>
<dbReference type="Pfam" id="PF03919">
    <property type="entry name" value="mRNA_cap_C"/>
    <property type="match status" value="1"/>
</dbReference>
<dbReference type="Pfam" id="PF01331">
    <property type="entry name" value="mRNA_cap_enzyme"/>
    <property type="match status" value="1"/>
</dbReference>
<dbReference type="PIRSF" id="PIRSF036958">
    <property type="entry name" value="mRNA_capping_HCE"/>
    <property type="match status" value="1"/>
</dbReference>
<dbReference type="SUPFAM" id="SSF52799">
    <property type="entry name" value="(Phosphotyrosine protein) phosphatases II"/>
    <property type="match status" value="1"/>
</dbReference>
<dbReference type="SUPFAM" id="SSF56091">
    <property type="entry name" value="DNA ligase/mRNA capping enzyme, catalytic domain"/>
    <property type="match status" value="1"/>
</dbReference>
<dbReference type="SUPFAM" id="SSF50249">
    <property type="entry name" value="Nucleic acid-binding proteins"/>
    <property type="match status" value="1"/>
</dbReference>
<dbReference type="PROSITE" id="PS00383">
    <property type="entry name" value="TYR_PHOSPHATASE_1"/>
    <property type="match status" value="1"/>
</dbReference>
<dbReference type="PROSITE" id="PS50056">
    <property type="entry name" value="TYR_PHOSPHATASE_2"/>
    <property type="match status" value="1"/>
</dbReference>
<dbReference type="PROSITE" id="PS50054">
    <property type="entry name" value="TYR_PHOSPHATASE_DUAL"/>
    <property type="match status" value="1"/>
</dbReference>